<organism>
    <name type="scientific">Streptococcus pneumoniae (strain ATCC 700669 / Spain 23F-1)</name>
    <dbReference type="NCBI Taxonomy" id="561276"/>
    <lineage>
        <taxon>Bacteria</taxon>
        <taxon>Bacillati</taxon>
        <taxon>Bacillota</taxon>
        <taxon>Bacilli</taxon>
        <taxon>Lactobacillales</taxon>
        <taxon>Streptococcaceae</taxon>
        <taxon>Streptococcus</taxon>
    </lineage>
</organism>
<dbReference type="EMBL" id="FM211187">
    <property type="protein sequence ID" value="CAR68544.1"/>
    <property type="molecule type" value="Genomic_DNA"/>
</dbReference>
<dbReference type="RefSeq" id="WP_001105899.1">
    <property type="nucleotide sequence ID" value="NC_011900.1"/>
</dbReference>
<dbReference type="SMR" id="B8ZND1"/>
<dbReference type="GeneID" id="45653851"/>
<dbReference type="KEGG" id="sne:SPN23F06990"/>
<dbReference type="HOGENOM" id="CLU_077636_3_1_9"/>
<dbReference type="GO" id="GO:0005737">
    <property type="term" value="C:cytoplasm"/>
    <property type="evidence" value="ECO:0007669"/>
    <property type="project" value="UniProtKB-SubCell"/>
</dbReference>
<dbReference type="GO" id="GO:0005840">
    <property type="term" value="C:ribosome"/>
    <property type="evidence" value="ECO:0007669"/>
    <property type="project" value="InterPro"/>
</dbReference>
<dbReference type="GO" id="GO:0043022">
    <property type="term" value="F:ribosome binding"/>
    <property type="evidence" value="ECO:0007669"/>
    <property type="project" value="InterPro"/>
</dbReference>
<dbReference type="GO" id="GO:0042274">
    <property type="term" value="P:ribosomal small subunit biogenesis"/>
    <property type="evidence" value="ECO:0007669"/>
    <property type="project" value="UniProtKB-UniRule"/>
</dbReference>
<dbReference type="GO" id="GO:0006364">
    <property type="term" value="P:rRNA processing"/>
    <property type="evidence" value="ECO:0007669"/>
    <property type="project" value="UniProtKB-UniRule"/>
</dbReference>
<dbReference type="Gene3D" id="2.30.30.240">
    <property type="entry name" value="PRC-barrel domain"/>
    <property type="match status" value="1"/>
</dbReference>
<dbReference type="Gene3D" id="2.40.30.60">
    <property type="entry name" value="RimM"/>
    <property type="match status" value="1"/>
</dbReference>
<dbReference type="HAMAP" id="MF_00014">
    <property type="entry name" value="Ribosome_mat_RimM"/>
    <property type="match status" value="1"/>
</dbReference>
<dbReference type="InterPro" id="IPR027275">
    <property type="entry name" value="PRC-brl_dom"/>
</dbReference>
<dbReference type="InterPro" id="IPR011033">
    <property type="entry name" value="PRC_barrel-like_sf"/>
</dbReference>
<dbReference type="InterPro" id="IPR011961">
    <property type="entry name" value="RimM"/>
</dbReference>
<dbReference type="InterPro" id="IPR002676">
    <property type="entry name" value="RimM_N"/>
</dbReference>
<dbReference type="InterPro" id="IPR036976">
    <property type="entry name" value="RimM_N_sf"/>
</dbReference>
<dbReference type="InterPro" id="IPR009000">
    <property type="entry name" value="Transl_B-barrel_sf"/>
</dbReference>
<dbReference type="NCBIfam" id="TIGR02273">
    <property type="entry name" value="16S_RimM"/>
    <property type="match status" value="1"/>
</dbReference>
<dbReference type="PANTHER" id="PTHR33692">
    <property type="entry name" value="RIBOSOME MATURATION FACTOR RIMM"/>
    <property type="match status" value="1"/>
</dbReference>
<dbReference type="PANTHER" id="PTHR33692:SF1">
    <property type="entry name" value="RIBOSOME MATURATION FACTOR RIMM"/>
    <property type="match status" value="1"/>
</dbReference>
<dbReference type="Pfam" id="PF05239">
    <property type="entry name" value="PRC"/>
    <property type="match status" value="1"/>
</dbReference>
<dbReference type="Pfam" id="PF01782">
    <property type="entry name" value="RimM"/>
    <property type="match status" value="1"/>
</dbReference>
<dbReference type="SUPFAM" id="SSF50346">
    <property type="entry name" value="PRC-barrel domain"/>
    <property type="match status" value="1"/>
</dbReference>
<dbReference type="SUPFAM" id="SSF50447">
    <property type="entry name" value="Translation proteins"/>
    <property type="match status" value="1"/>
</dbReference>
<accession>B8ZND1</accession>
<comment type="function">
    <text evidence="1">An accessory protein needed during the final step in the assembly of 30S ribosomal subunit, possibly for assembly of the head region. Essential for efficient processing of 16S rRNA. May be needed both before and after RbfA during the maturation of 16S rRNA. It has affinity for free ribosomal 30S subunits but not for 70S ribosomes.</text>
</comment>
<comment type="subunit">
    <text evidence="1">Binds ribosomal protein uS19.</text>
</comment>
<comment type="subcellular location">
    <subcellularLocation>
        <location evidence="1">Cytoplasm</location>
    </subcellularLocation>
</comment>
<comment type="domain">
    <text evidence="1">The PRC barrel domain binds ribosomal protein uS19.</text>
</comment>
<comment type="similarity">
    <text evidence="1">Belongs to the RimM family.</text>
</comment>
<sequence>MNYFNVGKIVNTQGLQGEMRVLSVTDFAEERFKKGAELALFDEKDQFVQTVTIASHRKQKNFDIIKFKDMYHINTIEKYKGYSLKVAEEDLNDLDDGEFYYHEIIGLEVYEGDSLVGTIKEILQPGANDVWVVKRKGKRDLLLPYIPPVVLNVDIPNKRVDVEILEGLDDED</sequence>
<reference key="1">
    <citation type="journal article" date="2009" name="J. Bacteriol.">
        <title>Role of conjugative elements in the evolution of the multidrug-resistant pandemic clone Streptococcus pneumoniae Spain23F ST81.</title>
        <authorList>
            <person name="Croucher N.J."/>
            <person name="Walker D."/>
            <person name="Romero P."/>
            <person name="Lennard N."/>
            <person name="Paterson G.K."/>
            <person name="Bason N.C."/>
            <person name="Mitchell A.M."/>
            <person name="Quail M.A."/>
            <person name="Andrew P.W."/>
            <person name="Parkhill J."/>
            <person name="Bentley S.D."/>
            <person name="Mitchell T.J."/>
        </authorList>
    </citation>
    <scope>NUCLEOTIDE SEQUENCE [LARGE SCALE GENOMIC DNA]</scope>
    <source>
        <strain>ATCC 700669 / Spain 23F-1</strain>
    </source>
</reference>
<protein>
    <recommendedName>
        <fullName evidence="1">Ribosome maturation factor RimM</fullName>
    </recommendedName>
</protein>
<name>RIMM_STRPJ</name>
<evidence type="ECO:0000255" key="1">
    <source>
        <dbReference type="HAMAP-Rule" id="MF_00014"/>
    </source>
</evidence>
<feature type="chain" id="PRO_1000196573" description="Ribosome maturation factor RimM">
    <location>
        <begin position="1"/>
        <end position="172"/>
    </location>
</feature>
<feature type="domain" description="PRC barrel" evidence="1">
    <location>
        <begin position="95"/>
        <end position="168"/>
    </location>
</feature>
<gene>
    <name evidence="1" type="primary">rimM</name>
    <name type="ordered locus">SPN23F06990</name>
</gene>
<proteinExistence type="inferred from homology"/>
<keyword id="KW-0143">Chaperone</keyword>
<keyword id="KW-0963">Cytoplasm</keyword>
<keyword id="KW-0690">Ribosome biogenesis</keyword>
<keyword id="KW-0698">rRNA processing</keyword>